<feature type="chain" id="PRO_1000116048" description="Ferrochelatase">
    <location>
        <begin position="1"/>
        <end position="343"/>
    </location>
</feature>
<feature type="binding site" evidence="1">
    <location>
        <position position="211"/>
    </location>
    <ligand>
        <name>Fe cation</name>
        <dbReference type="ChEBI" id="CHEBI:24875"/>
    </ligand>
</feature>
<feature type="binding site" evidence="1">
    <location>
        <position position="292"/>
    </location>
    <ligand>
        <name>Fe cation</name>
        <dbReference type="ChEBI" id="CHEBI:24875"/>
    </ligand>
</feature>
<sequence length="343" mass="38236">MAFLHKTPRIAPPPEGRTGILLINLGTPDDTGYFSVRRYLSEFLSDRRVIESPPLIWQPILQSIILTKRPFASGANYARIWHKEENASPLRVYTRRQAEGLAERLRADGVPVEWGMRYGCPSVAKAVESLMDQGCDRIISIALYPQYSATTTATANDQLFRALMRLRRQPAVLTVPSFPDHPAFIRALETSVQDTLAGLSFKPQQIVASFHGLPKTCIEKGDTYRDECERTISALRQALGLSEEQMPLTFQSRFGPLEWVQPYTAPFVKALPAQGITKIAVIMPGFMVDCLETLDEIGNELREEFMEAGGEEFALVPCLNDSKGAIDLLEDLSRSAMAGFQRG</sequence>
<protein>
    <recommendedName>
        <fullName evidence="1">Ferrochelatase</fullName>
        <ecNumber evidence="1">4.98.1.1</ecNumber>
    </recommendedName>
    <alternativeName>
        <fullName evidence="1">Heme synthase</fullName>
    </alternativeName>
    <alternativeName>
        <fullName evidence="1">Protoheme ferro-lyase</fullName>
    </alternativeName>
</protein>
<reference key="1">
    <citation type="journal article" date="2005" name="Nat. Biotechnol.">
        <title>Complete genome sequence of the acetic acid bacterium Gluconobacter oxydans.</title>
        <authorList>
            <person name="Prust C."/>
            <person name="Hoffmeister M."/>
            <person name="Liesegang H."/>
            <person name="Wiezer A."/>
            <person name="Fricke W.F."/>
            <person name="Ehrenreich A."/>
            <person name="Gottschalk G."/>
            <person name="Deppenmeier U."/>
        </authorList>
    </citation>
    <scope>NUCLEOTIDE SEQUENCE [LARGE SCALE GENOMIC DNA]</scope>
    <source>
        <strain>621H</strain>
    </source>
</reference>
<comment type="function">
    <text evidence="1">Catalyzes the ferrous insertion into protoporphyrin IX.</text>
</comment>
<comment type="catalytic activity">
    <reaction evidence="1">
        <text>heme b + 2 H(+) = protoporphyrin IX + Fe(2+)</text>
        <dbReference type="Rhea" id="RHEA:22584"/>
        <dbReference type="ChEBI" id="CHEBI:15378"/>
        <dbReference type="ChEBI" id="CHEBI:29033"/>
        <dbReference type="ChEBI" id="CHEBI:57306"/>
        <dbReference type="ChEBI" id="CHEBI:60344"/>
        <dbReference type="EC" id="4.98.1.1"/>
    </reaction>
</comment>
<comment type="pathway">
    <text evidence="1">Porphyrin-containing compound metabolism; protoheme biosynthesis; protoheme from protoporphyrin-IX: step 1/1.</text>
</comment>
<comment type="subcellular location">
    <subcellularLocation>
        <location evidence="1">Cytoplasm</location>
    </subcellularLocation>
</comment>
<comment type="similarity">
    <text evidence="1">Belongs to the ferrochelatase family.</text>
</comment>
<keyword id="KW-0963">Cytoplasm</keyword>
<keyword id="KW-0350">Heme biosynthesis</keyword>
<keyword id="KW-0408">Iron</keyword>
<keyword id="KW-0456">Lyase</keyword>
<keyword id="KW-0479">Metal-binding</keyword>
<keyword id="KW-0627">Porphyrin biosynthesis</keyword>
<keyword id="KW-1185">Reference proteome</keyword>
<dbReference type="EC" id="4.98.1.1" evidence="1"/>
<dbReference type="EMBL" id="CP000009">
    <property type="protein sequence ID" value="AAW60647.1"/>
    <property type="molecule type" value="Genomic_DNA"/>
</dbReference>
<dbReference type="RefSeq" id="WP_011252443.1">
    <property type="nucleotide sequence ID" value="NC_006677.1"/>
</dbReference>
<dbReference type="SMR" id="Q5FSJ9"/>
<dbReference type="STRING" id="290633.GOX0874"/>
<dbReference type="KEGG" id="gox:GOX0874"/>
<dbReference type="eggNOG" id="COG0276">
    <property type="taxonomic scope" value="Bacteria"/>
</dbReference>
<dbReference type="HOGENOM" id="CLU_018884_0_0_5"/>
<dbReference type="UniPathway" id="UPA00252">
    <property type="reaction ID" value="UER00325"/>
</dbReference>
<dbReference type="Proteomes" id="UP000006375">
    <property type="component" value="Chromosome"/>
</dbReference>
<dbReference type="GO" id="GO:0005737">
    <property type="term" value="C:cytoplasm"/>
    <property type="evidence" value="ECO:0007669"/>
    <property type="project" value="UniProtKB-SubCell"/>
</dbReference>
<dbReference type="GO" id="GO:0004325">
    <property type="term" value="F:ferrochelatase activity"/>
    <property type="evidence" value="ECO:0007669"/>
    <property type="project" value="UniProtKB-UniRule"/>
</dbReference>
<dbReference type="GO" id="GO:0046872">
    <property type="term" value="F:metal ion binding"/>
    <property type="evidence" value="ECO:0007669"/>
    <property type="project" value="UniProtKB-KW"/>
</dbReference>
<dbReference type="GO" id="GO:0006783">
    <property type="term" value="P:heme biosynthetic process"/>
    <property type="evidence" value="ECO:0007669"/>
    <property type="project" value="UniProtKB-UniRule"/>
</dbReference>
<dbReference type="CDD" id="cd00419">
    <property type="entry name" value="Ferrochelatase_C"/>
    <property type="match status" value="1"/>
</dbReference>
<dbReference type="CDD" id="cd03411">
    <property type="entry name" value="Ferrochelatase_N"/>
    <property type="match status" value="1"/>
</dbReference>
<dbReference type="FunFam" id="3.40.50.1400:FF:000002">
    <property type="entry name" value="Ferrochelatase"/>
    <property type="match status" value="1"/>
</dbReference>
<dbReference type="Gene3D" id="3.40.50.1400">
    <property type="match status" value="2"/>
</dbReference>
<dbReference type="HAMAP" id="MF_00323">
    <property type="entry name" value="Ferrochelatase"/>
    <property type="match status" value="1"/>
</dbReference>
<dbReference type="InterPro" id="IPR001015">
    <property type="entry name" value="Ferrochelatase"/>
</dbReference>
<dbReference type="InterPro" id="IPR019772">
    <property type="entry name" value="Ferrochelatase_AS"/>
</dbReference>
<dbReference type="InterPro" id="IPR033644">
    <property type="entry name" value="Ferrochelatase_C"/>
</dbReference>
<dbReference type="InterPro" id="IPR033659">
    <property type="entry name" value="Ferrochelatase_N"/>
</dbReference>
<dbReference type="NCBIfam" id="TIGR00109">
    <property type="entry name" value="hemH"/>
    <property type="match status" value="1"/>
</dbReference>
<dbReference type="PANTHER" id="PTHR11108">
    <property type="entry name" value="FERROCHELATASE"/>
    <property type="match status" value="1"/>
</dbReference>
<dbReference type="PANTHER" id="PTHR11108:SF1">
    <property type="entry name" value="FERROCHELATASE, MITOCHONDRIAL"/>
    <property type="match status" value="1"/>
</dbReference>
<dbReference type="Pfam" id="PF00762">
    <property type="entry name" value="Ferrochelatase"/>
    <property type="match status" value="1"/>
</dbReference>
<dbReference type="SUPFAM" id="SSF53800">
    <property type="entry name" value="Chelatase"/>
    <property type="match status" value="1"/>
</dbReference>
<dbReference type="PROSITE" id="PS00534">
    <property type="entry name" value="FERROCHELATASE"/>
    <property type="match status" value="1"/>
</dbReference>
<organism>
    <name type="scientific">Gluconobacter oxydans (strain 621H)</name>
    <name type="common">Gluconobacter suboxydans</name>
    <dbReference type="NCBI Taxonomy" id="290633"/>
    <lineage>
        <taxon>Bacteria</taxon>
        <taxon>Pseudomonadati</taxon>
        <taxon>Pseudomonadota</taxon>
        <taxon>Alphaproteobacteria</taxon>
        <taxon>Acetobacterales</taxon>
        <taxon>Acetobacteraceae</taxon>
        <taxon>Gluconobacter</taxon>
    </lineage>
</organism>
<gene>
    <name evidence="1" type="primary">hemH</name>
    <name type="ordered locus">GOX0874</name>
</gene>
<evidence type="ECO:0000255" key="1">
    <source>
        <dbReference type="HAMAP-Rule" id="MF_00323"/>
    </source>
</evidence>
<name>HEMH_GLUOX</name>
<proteinExistence type="inferred from homology"/>
<accession>Q5FSJ9</accession>